<keyword id="KW-1185">Reference proteome</keyword>
<evidence type="ECO:0000255" key="1">
    <source>
        <dbReference type="HAMAP-Rule" id="MF_00758"/>
    </source>
</evidence>
<dbReference type="EMBL" id="BX640411">
    <property type="protein sequence ID" value="CAE40696.1"/>
    <property type="molecule type" value="Genomic_DNA"/>
</dbReference>
<dbReference type="RefSeq" id="NP_879194.1">
    <property type="nucleotide sequence ID" value="NC_002929.2"/>
</dbReference>
<dbReference type="RefSeq" id="WP_010927118.1">
    <property type="nucleotide sequence ID" value="NZ_CP039022.1"/>
</dbReference>
<dbReference type="SMR" id="Q7W046"/>
<dbReference type="STRING" id="257313.BP0319"/>
<dbReference type="PaxDb" id="257313-BP0319"/>
<dbReference type="KEGG" id="bpe:BP0319"/>
<dbReference type="PATRIC" id="fig|257313.5.peg.345"/>
<dbReference type="eggNOG" id="COG1678">
    <property type="taxonomic scope" value="Bacteria"/>
</dbReference>
<dbReference type="HOGENOM" id="CLU_057596_1_0_4"/>
<dbReference type="Proteomes" id="UP000002676">
    <property type="component" value="Chromosome"/>
</dbReference>
<dbReference type="GO" id="GO:0005829">
    <property type="term" value="C:cytosol"/>
    <property type="evidence" value="ECO:0007669"/>
    <property type="project" value="TreeGrafter"/>
</dbReference>
<dbReference type="Gene3D" id="3.40.1740.10">
    <property type="entry name" value="VC0467-like"/>
    <property type="match status" value="1"/>
</dbReference>
<dbReference type="HAMAP" id="MF_00758">
    <property type="entry name" value="UPF0301"/>
    <property type="match status" value="1"/>
</dbReference>
<dbReference type="InterPro" id="IPR003774">
    <property type="entry name" value="AlgH-like"/>
</dbReference>
<dbReference type="NCBIfam" id="NF001266">
    <property type="entry name" value="PRK00228.1-1"/>
    <property type="match status" value="1"/>
</dbReference>
<dbReference type="NCBIfam" id="NF001267">
    <property type="entry name" value="PRK00228.1-2"/>
    <property type="match status" value="1"/>
</dbReference>
<dbReference type="PANTHER" id="PTHR30327">
    <property type="entry name" value="UNCHARACTERIZED PROTEIN YQGE"/>
    <property type="match status" value="1"/>
</dbReference>
<dbReference type="PANTHER" id="PTHR30327:SF1">
    <property type="entry name" value="UPF0301 PROTEIN YQGE"/>
    <property type="match status" value="1"/>
</dbReference>
<dbReference type="Pfam" id="PF02622">
    <property type="entry name" value="DUF179"/>
    <property type="match status" value="1"/>
</dbReference>
<dbReference type="SUPFAM" id="SSF143456">
    <property type="entry name" value="VC0467-like"/>
    <property type="match status" value="1"/>
</dbReference>
<reference key="1">
    <citation type="journal article" date="2003" name="Nat. Genet.">
        <title>Comparative analysis of the genome sequences of Bordetella pertussis, Bordetella parapertussis and Bordetella bronchiseptica.</title>
        <authorList>
            <person name="Parkhill J."/>
            <person name="Sebaihia M."/>
            <person name="Preston A."/>
            <person name="Murphy L.D."/>
            <person name="Thomson N.R."/>
            <person name="Harris D.E."/>
            <person name="Holden M.T.G."/>
            <person name="Churcher C.M."/>
            <person name="Bentley S.D."/>
            <person name="Mungall K.L."/>
            <person name="Cerdeno-Tarraga A.-M."/>
            <person name="Temple L."/>
            <person name="James K.D."/>
            <person name="Harris B."/>
            <person name="Quail M.A."/>
            <person name="Achtman M."/>
            <person name="Atkin R."/>
            <person name="Baker S."/>
            <person name="Basham D."/>
            <person name="Bason N."/>
            <person name="Cherevach I."/>
            <person name="Chillingworth T."/>
            <person name="Collins M."/>
            <person name="Cronin A."/>
            <person name="Davis P."/>
            <person name="Doggett J."/>
            <person name="Feltwell T."/>
            <person name="Goble A."/>
            <person name="Hamlin N."/>
            <person name="Hauser H."/>
            <person name="Holroyd S."/>
            <person name="Jagels K."/>
            <person name="Leather S."/>
            <person name="Moule S."/>
            <person name="Norberczak H."/>
            <person name="O'Neil S."/>
            <person name="Ormond D."/>
            <person name="Price C."/>
            <person name="Rabbinowitsch E."/>
            <person name="Rutter S."/>
            <person name="Sanders M."/>
            <person name="Saunders D."/>
            <person name="Seeger K."/>
            <person name="Sharp S."/>
            <person name="Simmonds M."/>
            <person name="Skelton J."/>
            <person name="Squares R."/>
            <person name="Squares S."/>
            <person name="Stevens K."/>
            <person name="Unwin L."/>
            <person name="Whitehead S."/>
            <person name="Barrell B.G."/>
            <person name="Maskell D.J."/>
        </authorList>
    </citation>
    <scope>NUCLEOTIDE SEQUENCE [LARGE SCALE GENOMIC DNA]</scope>
    <source>
        <strain>Tohama I / ATCC BAA-589 / NCTC 13251</strain>
    </source>
</reference>
<feature type="chain" id="PRO_0000214308" description="UPF0301 protein BP0319">
    <location>
        <begin position="1"/>
        <end position="201"/>
    </location>
</feature>
<proteinExistence type="inferred from homology"/>
<organism>
    <name type="scientific">Bordetella pertussis (strain Tohama I / ATCC BAA-589 / NCTC 13251)</name>
    <dbReference type="NCBI Taxonomy" id="257313"/>
    <lineage>
        <taxon>Bacteria</taxon>
        <taxon>Pseudomonadati</taxon>
        <taxon>Pseudomonadota</taxon>
        <taxon>Betaproteobacteria</taxon>
        <taxon>Burkholderiales</taxon>
        <taxon>Alcaligenaceae</taxon>
        <taxon>Bordetella</taxon>
    </lineage>
</organism>
<sequence>MTDSHRPDADDIPDDDELSTDFSNQFLLAMPGVVEGSLAGTVIYICEHTRRGALGLVINRPTDLTLATLFERIDLKLEIGPVKDEMVFFGGPVQTDRGFVLHAPAGDYTSSINLGELALTTSRDVLQAVADGNGPARMLVTLGYAGWGAGQLESEMAQNSWLSVGADSHIIFDVAPEDRYPAALKLLGVDPVMLAGGAGHA</sequence>
<protein>
    <recommendedName>
        <fullName evidence="1">UPF0301 protein BP0319</fullName>
    </recommendedName>
</protein>
<name>Y319_BORPE</name>
<comment type="similarity">
    <text evidence="1">Belongs to the UPF0301 (AlgH) family.</text>
</comment>
<gene>
    <name type="ordered locus">BP0319</name>
</gene>
<accession>Q7W046</accession>